<protein>
    <recommendedName>
        <fullName evidence="7">O-acetyltransferase PaAT-1</fullName>
        <ecNumber evidence="6">2.3.1.-</ecNumber>
    </recommendedName>
    <alternativeName>
        <fullName evidence="7">Fusicoccin A biosynthetic gene clusters protein 9</fullName>
    </alternativeName>
</protein>
<dbReference type="EC" id="2.3.1.-" evidence="6"/>
<dbReference type="EMBL" id="AB686275">
    <property type="protein sequence ID" value="BAM71034.1"/>
    <property type="molecule type" value="mRNA"/>
</dbReference>
<dbReference type="GlyCosmos" id="L0MXJ3">
    <property type="glycosylation" value="1 site, No reported glycans"/>
</dbReference>
<dbReference type="GO" id="GO:0016020">
    <property type="term" value="C:membrane"/>
    <property type="evidence" value="ECO:0007669"/>
    <property type="project" value="UniProtKB-SubCell"/>
</dbReference>
<dbReference type="GO" id="GO:0016747">
    <property type="term" value="F:acyltransferase activity, transferring groups other than amino-acyl groups"/>
    <property type="evidence" value="ECO:0007669"/>
    <property type="project" value="InterPro"/>
</dbReference>
<dbReference type="InterPro" id="IPR002656">
    <property type="entry name" value="Acyl_transf_3_dom"/>
</dbReference>
<dbReference type="InterPro" id="IPR050879">
    <property type="entry name" value="Acyltransferase_3"/>
</dbReference>
<dbReference type="PANTHER" id="PTHR23028">
    <property type="entry name" value="ACETYLTRANSFERASE"/>
    <property type="match status" value="1"/>
</dbReference>
<dbReference type="PANTHER" id="PTHR23028:SF134">
    <property type="entry name" value="PUTATIVE (AFU_ORTHOLOGUE AFUA_4G08520)-RELATED"/>
    <property type="match status" value="1"/>
</dbReference>
<dbReference type="Pfam" id="PF01757">
    <property type="entry name" value="Acyl_transf_3"/>
    <property type="match status" value="1"/>
</dbReference>
<evidence type="ECO:0000255" key="1"/>
<evidence type="ECO:0000255" key="2">
    <source>
        <dbReference type="PROSITE-ProRule" id="PRU00498"/>
    </source>
</evidence>
<evidence type="ECO:0000269" key="3">
    <source>
    </source>
</evidence>
<evidence type="ECO:0000269" key="4">
    <source>
    </source>
</evidence>
<evidence type="ECO:0000269" key="5">
    <source>
    </source>
</evidence>
<evidence type="ECO:0000269" key="6">
    <source>
    </source>
</evidence>
<evidence type="ECO:0000303" key="7">
    <source>
    </source>
</evidence>
<evidence type="ECO:0000305" key="8"/>
<comment type="function">
    <text evidence="3 4 5 6">O-acetyltransferase; part of the 2 gene clusters that mediate the biosynthesis of fusicoccins, diterpene glucosides that display phytohormone-like activity and function as potent activators of plasma membrane H(+)-ATPases in plants by modifying 14-3-3 proteins and cause the plant disease constriction canker (PubMed:22870285). The first step in the pathway is performed by the fusicoccadiene synthase PaFS that possesses both prenyl transferase and terpene cyclase activity, converting isopentenyl diphosphate and dimethylallyl diphosphate into geranylgeranyl diphosphate (GGDP) and successively converting GGDP into fusicocca-2,10(14)-diene, a precursor for fusicoccin H (PubMed:17360612). The second step is the oxidation at the C-8 position by the cytochrome P450 monooxygenase PaP450-2 to yield fusicocca-2,10(14)-diene-8-beta-ol (PubMed:22870285). The cytochrome P450 monooxygenase PaP450-1 then catalyzes the hydroxylation at the C-16 position to produce fusicocca-2,10(14)-diene-8-beta,16-diol (PubMed:22870285). The dioxygenase fc-dox then catalyzes the 16-oxydation of fusicocca-2,10(14)-diene-8-beta,16-diol to yield an aldehyde (8-beta-hydroxyfusicocca-1,10(14)-dien-16-al) (PubMed:21299202, PubMed:22870285). The short-chain dehydrogenase/reductase fc-sdr catalyzes the reduction of the aldehyde to yield fusicocca-1,10(14)-diene-8-beta,16-diol (PubMed:21299202, PubMed:22870285). The next step is the hydroxylation at C-9 performed by the cytochrome P450 monooxygenase PaP450-3 that leads to fusicoccin H aglycon which is glycosylated to fusicoccin H by the O-glycosyltransferase PaGT (PubMed:22870285). Hydroxylation at C-12 by the cytochrome P450 monooxygenase PaP450-4 leads then to the production of fusicoccin Q and is followed by methylation by the O-methyltransferase PaMT to yield fusicoccin P (PubMed:22870285). Fusicoccin P is further converted to fusicoccin J via prenylation by the O-glucose prenyltransferase PaPT (PubMed:22287087). Cytochrome P450 monooxygenase PaP450-5 then performs hydroxylation at C-19 to yield dideacetyl-fusicoccin A which is acetylated to 3'-O-deacetyl-fusicoccin A by the O-acetyltransferase PaAT-2 (PubMed:22870285). Finally, a another acetylation by the O-acetyltransferase PaAT-1 yields fusicoccin A (PubMed:22870285).</text>
</comment>
<comment type="pathway">
    <text evidence="6">Mycotoxin biosynthesis.</text>
</comment>
<comment type="subcellular location">
    <subcellularLocation>
        <location evidence="1">Membrane</location>
        <topology evidence="1">Multi-pass membrane protein</topology>
    </subcellularLocation>
</comment>
<comment type="similarity">
    <text evidence="8">Belongs to the acyltransferase 3 family.</text>
</comment>
<organism>
    <name type="scientific">Phomopsis amygdali</name>
    <name type="common">Fusicoccum amygdali</name>
    <dbReference type="NCBI Taxonomy" id="1214568"/>
    <lineage>
        <taxon>Eukaryota</taxon>
        <taxon>Fungi</taxon>
        <taxon>Dikarya</taxon>
        <taxon>Ascomycota</taxon>
        <taxon>Pezizomycotina</taxon>
        <taxon>Sordariomycetes</taxon>
        <taxon>Sordariomycetidae</taxon>
        <taxon>Diaporthales</taxon>
        <taxon>Diaporthaceae</taxon>
        <taxon>Diaporthe</taxon>
    </lineage>
</organism>
<gene>
    <name evidence="7" type="primary">PaAT-1</name>
    <name evidence="7" type="synonym">orf9</name>
</gene>
<name>FC9_PHOAM</name>
<reference key="1">
    <citation type="journal article" date="2012" name="PLoS ONE">
        <title>Molecular breeding of a fungus producing a precursor diterpene suitable for semi-synthesis by dissection of the biosynthetic machinery.</title>
        <authorList>
            <person name="Noike M."/>
            <person name="Ono Y."/>
            <person name="Araki Y."/>
            <person name="Tanio R."/>
            <person name="Higuchi Y."/>
            <person name="Nitta H."/>
            <person name="Hamano Y."/>
            <person name="Toyomasu T."/>
            <person name="Sassa T."/>
            <person name="Kato N."/>
            <person name="Dairi T."/>
        </authorList>
    </citation>
    <scope>NUCLEOTIDE SEQUENCE [MRNA]</scope>
    <scope>FUNCTION</scope>
    <scope>CATALYTIC ACTIVITY</scope>
    <scope>PATHWAY</scope>
</reference>
<reference key="2">
    <citation type="journal article" date="2007" name="Proc. Natl. Acad. Sci. U.S.A.">
        <title>Fusicoccins are biosynthesized by an unusual chimera diterpene synthase in fungi.</title>
        <authorList>
            <person name="Toyomasu T."/>
            <person name="Tsukahara M."/>
            <person name="Kaneko A."/>
            <person name="Niida R."/>
            <person name="Mitsuhashi W."/>
            <person name="Dairi T."/>
            <person name="Kato N."/>
            <person name="Sassa T."/>
        </authorList>
    </citation>
    <scope>FUNCTION</scope>
</reference>
<reference key="3">
    <citation type="journal article" date="2011" name="J. Am. Chem. Soc.">
        <title>Dioxygenases, key enzymes to determine the aglycon structures of fusicoccin and brassicicene, diterpene compounds produced by fungi.</title>
        <authorList>
            <person name="Ono Y."/>
            <person name="Minami A."/>
            <person name="Noike M."/>
            <person name="Higuchi Y."/>
            <person name="Toyomasu T."/>
            <person name="Sassa T."/>
            <person name="Kato N."/>
            <person name="Dairi T."/>
        </authorList>
    </citation>
    <scope>FUNCTION</scope>
</reference>
<reference key="4">
    <citation type="journal article" date="2012" name="ChemBioChem">
        <title>An enzyme catalyzing O-prenylation of the glucose moiety of fusicoccin A, a diterpene glucoside produced by the fungus Phomopsis amygdali.</title>
        <authorList>
            <person name="Noike M."/>
            <person name="Liu C."/>
            <person name="Ono Y."/>
            <person name="Hamano Y."/>
            <person name="Toyomasu T."/>
            <person name="Sassa T."/>
            <person name="Kato N."/>
            <person name="Dairi T."/>
        </authorList>
    </citation>
    <scope>FUNCTION</scope>
</reference>
<proteinExistence type="evidence at protein level"/>
<feature type="chain" id="PRO_0000445460" description="O-acetyltransferase PaAT-1">
    <location>
        <begin position="1"/>
        <end position="497"/>
    </location>
</feature>
<feature type="transmembrane region" description="Helical" evidence="1">
    <location>
        <begin position="69"/>
        <end position="89"/>
    </location>
</feature>
<feature type="transmembrane region" description="Helical" evidence="1">
    <location>
        <begin position="107"/>
        <end position="127"/>
    </location>
</feature>
<feature type="transmembrane region" description="Helical" evidence="1">
    <location>
        <begin position="157"/>
        <end position="177"/>
    </location>
</feature>
<feature type="transmembrane region" description="Helical" evidence="1">
    <location>
        <begin position="241"/>
        <end position="261"/>
    </location>
</feature>
<feature type="transmembrane region" description="Helical" evidence="1">
    <location>
        <begin position="278"/>
        <end position="298"/>
    </location>
</feature>
<feature type="transmembrane region" description="Helical" evidence="1">
    <location>
        <begin position="329"/>
        <end position="349"/>
    </location>
</feature>
<feature type="transmembrane region" description="Helical" evidence="1">
    <location>
        <begin position="375"/>
        <end position="395"/>
    </location>
</feature>
<feature type="transmembrane region" description="Helical" evidence="1">
    <location>
        <begin position="406"/>
        <end position="426"/>
    </location>
</feature>
<feature type="transmembrane region" description="Helical" evidence="1">
    <location>
        <begin position="443"/>
        <end position="463"/>
    </location>
</feature>
<feature type="glycosylation site" description="N-linked (GlcNAc...) asparagine" evidence="2">
    <location>
        <position position="35"/>
    </location>
</feature>
<sequence>MIELGQSYSTIQAMTKQKPLKSLRQRVKENQTPPNRSQNHLGILRPSFSQHSRERKMLHSTSWLDGLRGISATCVVVHHCTLQWFGWHIHEPWFPGQSFLKLPVIRLLISGSPHVYIFFVISGYSLSYKPLKLSRQGRFDEAASVLSSSIFRRHARLFVPTTIVTFFCAIMTQLNWYGKAEHMPGVAVPAWEPPHLDNIWAQLNNFAWNELLFMDPVGRTVAKGDPGEQVKQLHNPYDYVLWTLPVEFNSSMVLLMFLMAFSRVESRARMAFCLAMAVLFQCFFIYWALFLFFSGMLICDLRLELGEALSTRAPSKDTRSWSKHLFVRAIGVGCFVLSLCALSTPHLAFGGREAPGFVTLASMIPERFGDQLLMPIAAIGLVLTLDHHPFLQVLFTNSFAQYMGRISFALFLVHGPLLNTLGHALGRRFIALIGGDTEERYLVAISLTAMVFWLMTILLADFVYQYVDLASVQVSKWAYQRLLRTEEQPGKYEWKSR</sequence>
<accession>L0MXJ3</accession>
<keyword id="KW-0012">Acyltransferase</keyword>
<keyword id="KW-0325">Glycoprotein</keyword>
<keyword id="KW-0472">Membrane</keyword>
<keyword id="KW-0808">Transferase</keyword>
<keyword id="KW-0812">Transmembrane</keyword>
<keyword id="KW-1133">Transmembrane helix</keyword>